<proteinExistence type="evidence at transcript level"/>
<evidence type="ECO:0000250" key="1">
    <source>
        <dbReference type="UniProtKB" id="Q8IZJ0"/>
    </source>
</evidence>
<evidence type="ECO:0000255" key="2"/>
<evidence type="ECO:0000269" key="3">
    <source>
    </source>
</evidence>
<evidence type="ECO:0000269" key="4">
    <source>
    </source>
</evidence>
<evidence type="ECO:0000269" key="5">
    <source>
    </source>
</evidence>
<evidence type="ECO:0000269" key="6">
    <source>
    </source>
</evidence>
<evidence type="ECO:0000303" key="7">
    <source>
    </source>
</evidence>
<evidence type="ECO:0000305" key="8"/>
<evidence type="ECO:0000312" key="9">
    <source>
        <dbReference type="EMBL" id="AAX58714.1"/>
    </source>
</evidence>
<evidence type="ECO:0000312" key="10">
    <source>
        <dbReference type="MGI" id="MGI:3647279"/>
    </source>
</evidence>
<comment type="function">
    <text evidence="3 4 5 6">Cytokine with antiviral, antitumour and immunomodulatory activities. Plays a critical role in the antiviral host defense, predominantly in the epithelial tissues. Acts as a ligand for the heterodimeric class II cytokine receptor composed of IL10RB and IFNLR1, and receptor engagement leads to the activation of the JAK/STAT signaling pathway resulting in the expression of IFN-stimulated genes (ISG), which mediate the antiviral state. Has a restricted receptor distribution and therefore restricted targets: is primarily active in epithelial cells and this cell type-selective action is because of the epithelial cell-specific expression of its receptor IFNLR1. Seems not to be essential for early virus-activated host defense in vaginal infection, but plays an important role in Toll-like receptor (TLR)-induced antiviral defense. Plays a significant role in the antiviral immune defense in the intestinal epithelium. Exerts an immunomodulatory effect by up-regulating MHC class I antigen expression.</text>
</comment>
<comment type="subcellular location">
    <subcellularLocation>
        <location evidence="1">Secreted</location>
    </subcellularLocation>
</comment>
<comment type="similarity">
    <text evidence="8">Belongs to the lambda interferon family.</text>
</comment>
<name>IFNL2_MOUSE</name>
<accession>Q4VK74</accession>
<accession>E9Q2S2</accession>
<sequence>MLLLLLPLLLAAVLTRTQADPVPRATRLPVEAKDCHIAQFKSLSPKELQAFKKAKDAIEKRLLEKDLRCSSHLFPRAWDLKQLQVQERPKALQAEVALTLKVWENMTDSALATILGQPLHTLSHIHSQLQTCTQLQATAEPRSPSRRLSRWLHRLQEAQSKETPGCLEASVTSNLFRLLTRDLKCVANGDQCV</sequence>
<protein>
    <recommendedName>
        <fullName evidence="7">Interferon lambda-2</fullName>
        <shortName evidence="7">IFN-lambda-2</shortName>
    </recommendedName>
    <alternativeName>
        <fullName evidence="10">Interleukin-28A</fullName>
        <shortName evidence="1">IL-28A</shortName>
    </alternativeName>
</protein>
<dbReference type="EMBL" id="AY869695">
    <property type="protein sequence ID" value="AAX58714.1"/>
    <property type="molecule type" value="mRNA"/>
</dbReference>
<dbReference type="EMBL" id="AC149606">
    <property type="status" value="NOT_ANNOTATED_CDS"/>
    <property type="molecule type" value="Genomic_DNA"/>
</dbReference>
<dbReference type="CCDS" id="CCDS39861.1"/>
<dbReference type="RefSeq" id="NP_001019844.2">
    <property type="nucleotide sequence ID" value="NM_001024673.2"/>
</dbReference>
<dbReference type="SMR" id="Q4VK74"/>
<dbReference type="FunCoup" id="Q4VK74">
    <property type="interactions" value="354"/>
</dbReference>
<dbReference type="STRING" id="10090.ENSMUSP00000080384"/>
<dbReference type="GlyCosmos" id="Q4VK74">
    <property type="glycosylation" value="1 site, No reported glycans"/>
</dbReference>
<dbReference type="GlyGen" id="Q4VK74">
    <property type="glycosylation" value="1 site"/>
</dbReference>
<dbReference type="iPTMnet" id="Q4VK74"/>
<dbReference type="PhosphoSitePlus" id="Q4VK74"/>
<dbReference type="PaxDb" id="10090-ENSMUSP00000080384"/>
<dbReference type="DNASU" id="330496"/>
<dbReference type="Ensembl" id="ENSMUST00000081684.3">
    <property type="protein sequence ID" value="ENSMUSP00000080384.3"/>
    <property type="gene ID" value="ENSMUSG00000059128.4"/>
</dbReference>
<dbReference type="GeneID" id="330496"/>
<dbReference type="KEGG" id="mmu:330496"/>
<dbReference type="UCSC" id="uc009fzd.1">
    <property type="organism name" value="mouse"/>
</dbReference>
<dbReference type="AGR" id="MGI:3647279"/>
<dbReference type="CTD" id="282616"/>
<dbReference type="MGI" id="MGI:3647279">
    <property type="gene designation" value="Ifnl2"/>
</dbReference>
<dbReference type="VEuPathDB" id="HostDB:ENSMUSG00000059128"/>
<dbReference type="eggNOG" id="ENOG502SSDC">
    <property type="taxonomic scope" value="Eukaryota"/>
</dbReference>
<dbReference type="GeneTree" id="ENSGT00390000014310"/>
<dbReference type="HOGENOM" id="CLU_120266_0_0_1"/>
<dbReference type="InParanoid" id="Q4VK74"/>
<dbReference type="OMA" id="TTTWKGC"/>
<dbReference type="OrthoDB" id="9897984at2759"/>
<dbReference type="PhylomeDB" id="Q4VK74"/>
<dbReference type="TreeFam" id="TF336172"/>
<dbReference type="Reactome" id="R-MMU-8854691">
    <property type="pathway name" value="Interleukin-20 family signaling"/>
</dbReference>
<dbReference type="BioGRID-ORCS" id="330496">
    <property type="hits" value="4 hits in 76 CRISPR screens"/>
</dbReference>
<dbReference type="PRO" id="PR:Q4VK74"/>
<dbReference type="Proteomes" id="UP000000589">
    <property type="component" value="Chromosome 7"/>
</dbReference>
<dbReference type="RNAct" id="Q4VK74">
    <property type="molecule type" value="protein"/>
</dbReference>
<dbReference type="Bgee" id="ENSMUSG00000059128">
    <property type="expression patterns" value="Expressed in thymus and 1 other cell type or tissue"/>
</dbReference>
<dbReference type="GO" id="GO:0005615">
    <property type="term" value="C:extracellular space"/>
    <property type="evidence" value="ECO:0007669"/>
    <property type="project" value="UniProtKB-KW"/>
</dbReference>
<dbReference type="GO" id="GO:0005125">
    <property type="term" value="F:cytokine activity"/>
    <property type="evidence" value="ECO:0007669"/>
    <property type="project" value="UniProtKB-KW"/>
</dbReference>
<dbReference type="GO" id="GO:0007259">
    <property type="term" value="P:cell surface receptor signaling pathway via JAK-STAT"/>
    <property type="evidence" value="ECO:0007669"/>
    <property type="project" value="InterPro"/>
</dbReference>
<dbReference type="GO" id="GO:0051607">
    <property type="term" value="P:defense response to virus"/>
    <property type="evidence" value="ECO:0000314"/>
    <property type="project" value="UniProtKB"/>
</dbReference>
<dbReference type="GO" id="GO:0002385">
    <property type="term" value="P:mucosal immune response"/>
    <property type="evidence" value="ECO:0000314"/>
    <property type="project" value="UniProtKB"/>
</dbReference>
<dbReference type="GO" id="GO:0050778">
    <property type="term" value="P:positive regulation of immune response"/>
    <property type="evidence" value="ECO:0007669"/>
    <property type="project" value="InterPro"/>
</dbReference>
<dbReference type="FunFam" id="1.20.1250.60:FF:000001">
    <property type="entry name" value="Interferon lambda 1"/>
    <property type="match status" value="1"/>
</dbReference>
<dbReference type="Gene3D" id="1.20.1250.60">
    <property type="entry name" value="Interferon lambda"/>
    <property type="match status" value="1"/>
</dbReference>
<dbReference type="InterPro" id="IPR038326">
    <property type="entry name" value="IFN-lambda_sf"/>
</dbReference>
<dbReference type="InterPro" id="IPR029177">
    <property type="entry name" value="INF_lambda"/>
</dbReference>
<dbReference type="PANTHER" id="PTHR31943:SF1">
    <property type="entry name" value="INTERFERON LAMBDA-2-RELATED"/>
    <property type="match status" value="1"/>
</dbReference>
<dbReference type="PANTHER" id="PTHR31943">
    <property type="entry name" value="INTERLEUKIN-28 AND 29"/>
    <property type="match status" value="1"/>
</dbReference>
<dbReference type="Pfam" id="PF15177">
    <property type="entry name" value="IL28A"/>
    <property type="match status" value="1"/>
</dbReference>
<keyword id="KW-0051">Antiviral defense</keyword>
<keyword id="KW-0202">Cytokine</keyword>
<keyword id="KW-0325">Glycoprotein</keyword>
<keyword id="KW-1185">Reference proteome</keyword>
<keyword id="KW-0964">Secreted</keyword>
<keyword id="KW-0732">Signal</keyword>
<feature type="signal peptide" evidence="2">
    <location>
        <begin position="1"/>
        <end position="19"/>
    </location>
</feature>
<feature type="chain" id="PRO_0000345632" description="Interferon lambda-2">
    <location>
        <begin position="20"/>
        <end position="193"/>
    </location>
</feature>
<feature type="glycosylation site" description="N-linked (GlcNAc...) asparagine" evidence="2">
    <location>
        <position position="105"/>
    </location>
</feature>
<feature type="sequence conflict" description="In Ref. 1; AAX58714." evidence="8" ref="1">
    <original>L</original>
    <variation>M</variation>
    <location>
        <position position="67"/>
    </location>
</feature>
<feature type="sequence conflict" description="In Ref. 1; AAX58714." evidence="8" ref="1">
    <original>FP</original>
    <variation>IS</variation>
    <location>
        <begin position="74"/>
        <end position="75"/>
    </location>
</feature>
<feature type="sequence conflict" description="In Ref. 1; AAX58714." evidence="8" ref="1">
    <original>RS</original>
    <variation>KP</variation>
    <location>
        <begin position="142"/>
        <end position="143"/>
    </location>
</feature>
<feature type="sequence conflict" description="In Ref. 1; AAX58714." evidence="8" ref="1">
    <original>A</original>
    <variation>D</variation>
    <location>
        <position position="169"/>
    </location>
</feature>
<feature type="sequence conflict" description="In Ref. 1; AAX58714." evidence="8" ref="1">
    <original>N</original>
    <variation>S</variation>
    <location>
        <position position="188"/>
    </location>
</feature>
<organism>
    <name type="scientific">Mus musculus</name>
    <name type="common">Mouse</name>
    <dbReference type="NCBI Taxonomy" id="10090"/>
    <lineage>
        <taxon>Eukaryota</taxon>
        <taxon>Metazoa</taxon>
        <taxon>Chordata</taxon>
        <taxon>Craniata</taxon>
        <taxon>Vertebrata</taxon>
        <taxon>Euteleostomi</taxon>
        <taxon>Mammalia</taxon>
        <taxon>Eutheria</taxon>
        <taxon>Euarchontoglires</taxon>
        <taxon>Glires</taxon>
        <taxon>Rodentia</taxon>
        <taxon>Myomorpha</taxon>
        <taxon>Muroidea</taxon>
        <taxon>Muridae</taxon>
        <taxon>Murinae</taxon>
        <taxon>Mus</taxon>
        <taxon>Mus</taxon>
    </lineage>
</organism>
<reference evidence="8 9" key="1">
    <citation type="journal article" date="2005" name="J. Gen. Virol.">
        <title>Murine interferon lambdas (type III interferons) exhibit potent antiviral activity in vivo in a poxvirus infection model.</title>
        <authorList>
            <person name="Bartlett N.W."/>
            <person name="Buttigieg K."/>
            <person name="Kotenko S.V."/>
            <person name="Smith G.L."/>
        </authorList>
    </citation>
    <scope>NUCLEOTIDE SEQUENCE [MRNA]</scope>
    <scope>FUNCTION</scope>
    <source>
        <strain evidence="9">129/Sv</strain>
    </source>
</reference>
<reference key="2">
    <citation type="journal article" date="2009" name="PLoS Biol.">
        <title>Lineage-specific biology revealed by a finished genome assembly of the mouse.</title>
        <authorList>
            <person name="Church D.M."/>
            <person name="Goodstadt L."/>
            <person name="Hillier L.W."/>
            <person name="Zody M.C."/>
            <person name="Goldstein S."/>
            <person name="She X."/>
            <person name="Bult C.J."/>
            <person name="Agarwala R."/>
            <person name="Cherry J.L."/>
            <person name="DiCuccio M."/>
            <person name="Hlavina W."/>
            <person name="Kapustin Y."/>
            <person name="Meric P."/>
            <person name="Maglott D."/>
            <person name="Birtle Z."/>
            <person name="Marques A.C."/>
            <person name="Graves T."/>
            <person name="Zhou S."/>
            <person name="Teague B."/>
            <person name="Potamousis K."/>
            <person name="Churas C."/>
            <person name="Place M."/>
            <person name="Herschleb J."/>
            <person name="Runnheim R."/>
            <person name="Forrest D."/>
            <person name="Amos-Landgraf J."/>
            <person name="Schwartz D.C."/>
            <person name="Cheng Z."/>
            <person name="Lindblad-Toh K."/>
            <person name="Eichler E.E."/>
            <person name="Ponting C.P."/>
        </authorList>
    </citation>
    <scope>NUCLEOTIDE SEQUENCE [LARGE SCALE GENOMIC DNA]</scope>
    <source>
        <strain>C57BL/6J</strain>
    </source>
</reference>
<reference evidence="8" key="3">
    <citation type="journal article" date="2006" name="Cancer Res.">
        <title>Characterization of the mouse IFN-lambda ligand-receptor system: IFN-lambdas exhibit antitumor activity against B16 melanoma.</title>
        <authorList>
            <person name="Lasfar A."/>
            <person name="Lewis-Antes A."/>
            <person name="Smirnov S.V."/>
            <person name="Anantha S."/>
            <person name="Abushahba W."/>
            <person name="Tian B."/>
            <person name="Reuhl K."/>
            <person name="Dickensheets H."/>
            <person name="Sheikh F."/>
            <person name="Donnelly R.P."/>
            <person name="Raveche E."/>
            <person name="Kotenko S.V."/>
        </authorList>
    </citation>
    <scope>FUNCTION</scope>
</reference>
<reference key="4">
    <citation type="journal article" date="2008" name="J. Immunol.">
        <title>An important role for type III interferon (IFN-lambda/IL-28) in TLR-induced antiviral activity.</title>
        <authorList>
            <person name="Ank N."/>
            <person name="Iversen M.B."/>
            <person name="Bartholdy C."/>
            <person name="Staeheli P."/>
            <person name="Hartmann R."/>
            <person name="Jensen U.B."/>
            <person name="Dagnaes-Hansen F."/>
            <person name="Thomsen A.R."/>
            <person name="Chen Z."/>
            <person name="Haugen H."/>
            <person name="Klucher K."/>
            <person name="Paludan S.R."/>
        </authorList>
    </citation>
    <scope>FUNCTION</scope>
</reference>
<reference key="5">
    <citation type="journal article" date="2010" name="J. Interferon Cytokine Res.">
        <title>Interferon-lambda: a new addition to an old family.</title>
        <authorList>
            <person name="Donnelly R.P."/>
            <person name="Kotenko S.V."/>
        </authorList>
    </citation>
    <scope>REVIEW</scope>
</reference>
<reference key="6">
    <citation type="journal article" date="2011" name="Proc. Natl. Acad. Sci. U.S.A.">
        <title>IFN-lambda determines the intestinal epithelial antiviral host defense.</title>
        <authorList>
            <person name="Pott J."/>
            <person name="Mahlakoiv T."/>
            <person name="Mordstein M."/>
            <person name="Duerr C.U."/>
            <person name="Michiels T."/>
            <person name="Stockinger S."/>
            <person name="Staeheli P."/>
            <person name="Hornef M.W."/>
        </authorList>
    </citation>
    <scope>FUNCTION</scope>
</reference>
<reference key="7">
    <citation type="journal article" date="2014" name="J. Innate Immun.">
        <title>Interferon-lambda in the context of viral infections: production, response and therapeutic implications.</title>
        <authorList>
            <person name="Hermant P."/>
            <person name="Michiels T."/>
        </authorList>
    </citation>
    <scope>REVIEW</scope>
</reference>
<gene>
    <name type="primary">Ifnl2</name>
    <name type="synonym">Il28a</name>
</gene>